<accession>Q5UQ65</accession>
<proteinExistence type="predicted"/>
<organism>
    <name type="scientific">Acanthamoeba polyphaga mimivirus</name>
    <name type="common">APMV</name>
    <dbReference type="NCBI Taxonomy" id="212035"/>
    <lineage>
        <taxon>Viruses</taxon>
        <taxon>Varidnaviria</taxon>
        <taxon>Bamfordvirae</taxon>
        <taxon>Nucleocytoviricota</taxon>
        <taxon>Megaviricetes</taxon>
        <taxon>Imitervirales</taxon>
        <taxon>Mimiviridae</taxon>
        <taxon>Megamimivirinae</taxon>
        <taxon>Mimivirus</taxon>
        <taxon>Mimivirus bradfordmassiliense</taxon>
    </lineage>
</organism>
<protein>
    <recommendedName>
        <fullName>Uncharacterized protein R652</fullName>
    </recommendedName>
</protein>
<dbReference type="EMBL" id="AY653733">
    <property type="protein sequence ID" value="AAV50913.1"/>
    <property type="molecule type" value="Genomic_DNA"/>
</dbReference>
<dbReference type="KEGG" id="vg:9925297"/>
<dbReference type="OrthoDB" id="32217at10239"/>
<dbReference type="Proteomes" id="UP000001134">
    <property type="component" value="Genome"/>
</dbReference>
<dbReference type="SUPFAM" id="SSF56399">
    <property type="entry name" value="ADP-ribosylation"/>
    <property type="match status" value="1"/>
</dbReference>
<sequence length="352" mass="41826">MEENIFVIKFINDDRLYQIPLNIINKYPKSYFQSIIHFTNKFECLIETYTYEEFSDVYKYMIEDNFSMQNYLRNFCVLDYFGLNNIIYDELIPTIKFAENRINEFVSKNTYIYSTTIEEYFAYKRIFFDKPYIIPVQIVNVRSDGDRDKYLLFAGNGDLVDFGYVNTALSNDMFLKKSFLKLTDKIPQGLPFDFIRGVSIHEFERYLSNNQIESDYYLKFKSYMCTNEMTDKTYCNEVQYILNGIDINMSLELRGKYYYKNGFFSCKRLNENLLNKYIDTYSDKNTVTYNDDIISLCGKFFSEHKNLLFENMPVVFEDSVCDEYSAEYSTISHTTKISVSLGFINVKNVSDK</sequence>
<organismHost>
    <name type="scientific">Acanthamoeba polyphaga</name>
    <name type="common">Amoeba</name>
    <dbReference type="NCBI Taxonomy" id="5757"/>
</organismHost>
<reference key="1">
    <citation type="journal article" date="2004" name="Science">
        <title>The 1.2-megabase genome sequence of Mimivirus.</title>
        <authorList>
            <person name="Raoult D."/>
            <person name="Audic S."/>
            <person name="Robert C."/>
            <person name="Abergel C."/>
            <person name="Renesto P."/>
            <person name="Ogata H."/>
            <person name="La Scola B."/>
            <person name="Susan M."/>
            <person name="Claverie J.-M."/>
        </authorList>
    </citation>
    <scope>NUCLEOTIDE SEQUENCE [LARGE SCALE GENOMIC DNA]</scope>
    <source>
        <strain>Rowbotham-Bradford</strain>
    </source>
</reference>
<feature type="chain" id="PRO_0000247408" description="Uncharacterized protein R652">
    <location>
        <begin position="1"/>
        <end position="352"/>
    </location>
</feature>
<name>YR652_MIMIV</name>
<keyword id="KW-1185">Reference proteome</keyword>
<gene>
    <name type="ordered locus">MIMI_R652</name>
</gene>